<accession>P29651</accession>
<keyword id="KW-0186">Copper</keyword>
<keyword id="KW-0249">Electron transport</keyword>
<keyword id="KW-0349">Heme</keyword>
<keyword id="KW-0408">Iron</keyword>
<keyword id="KW-0460">Magnesium</keyword>
<keyword id="KW-0472">Membrane</keyword>
<keyword id="KW-0479">Metal-binding</keyword>
<keyword id="KW-0496">Mitochondrion</keyword>
<keyword id="KW-0999">Mitochondrion inner membrane</keyword>
<keyword id="KW-0679">Respiratory chain</keyword>
<keyword id="KW-0915">Sodium</keyword>
<keyword id="KW-1278">Translocase</keyword>
<keyword id="KW-0812">Transmembrane</keyword>
<keyword id="KW-1133">Transmembrane helix</keyword>
<keyword id="KW-0813">Transport</keyword>
<name>COX1_POLSX</name>
<reference key="1">
    <citation type="journal article" date="1991" name="Mol. Biol. Evol.">
        <title>Phylogenetic relationships of neopterygian fishes, inferred from mitochondrial DNA sequences.</title>
        <authorList>
            <person name="Normark B.B."/>
            <person name="McCune A.R."/>
            <person name="Harrison R.G."/>
        </authorList>
    </citation>
    <scope>NUCLEOTIDE SEQUENCE [GENOMIC DNA]</scope>
</reference>
<geneLocation type="mitochondrion"/>
<proteinExistence type="inferred from homology"/>
<gene>
    <name type="primary">mt-co1</name>
    <name type="synonym">coi</name>
    <name type="synonym">coxi</name>
    <name type="synonym">mtco1</name>
</gene>
<organism>
    <name type="scientific">Polypterus sp.</name>
    <name type="common">Bichir</name>
    <dbReference type="NCBI Taxonomy" id="8291"/>
    <lineage>
        <taxon>Eukaryota</taxon>
        <taxon>Metazoa</taxon>
        <taxon>Chordata</taxon>
        <taxon>Craniata</taxon>
        <taxon>Vertebrata</taxon>
        <taxon>Euteleostomi</taxon>
        <taxon>Actinopterygii</taxon>
        <taxon>Polypteriformes</taxon>
        <taxon>Polypteridae</taxon>
        <taxon>Polypterus</taxon>
    </lineage>
</organism>
<sequence>FWFFGHPEVYILILPGFGMISHIVAYYSGKNEPFGYMGMVWAMMAIGLLGFIVWAHHMYTVGMDVDTRAYFTSATMIIAIPTGVKVFSWLATLHGGAIKWETPMLWALGFIFLFTVGGLTGIILANSSLDIMLHDTYYVVAHFHYVLSMGAVFAIMGGFVHWFPLFSGYTLHSTWTKIHFGVMF</sequence>
<dbReference type="EC" id="7.1.1.9"/>
<dbReference type="EMBL" id="M64911">
    <property type="protein sequence ID" value="AAB01475.1"/>
    <property type="molecule type" value="Genomic_DNA"/>
</dbReference>
<dbReference type="SMR" id="P29651"/>
<dbReference type="UniPathway" id="UPA00705"/>
<dbReference type="GO" id="GO:0005743">
    <property type="term" value="C:mitochondrial inner membrane"/>
    <property type="evidence" value="ECO:0007669"/>
    <property type="project" value="UniProtKB-SubCell"/>
</dbReference>
<dbReference type="GO" id="GO:0045277">
    <property type="term" value="C:respiratory chain complex IV"/>
    <property type="evidence" value="ECO:0000250"/>
    <property type="project" value="UniProtKB"/>
</dbReference>
<dbReference type="GO" id="GO:0004129">
    <property type="term" value="F:cytochrome-c oxidase activity"/>
    <property type="evidence" value="ECO:0007669"/>
    <property type="project" value="UniProtKB-EC"/>
</dbReference>
<dbReference type="GO" id="GO:0020037">
    <property type="term" value="F:heme binding"/>
    <property type="evidence" value="ECO:0007669"/>
    <property type="project" value="InterPro"/>
</dbReference>
<dbReference type="GO" id="GO:0046872">
    <property type="term" value="F:metal ion binding"/>
    <property type="evidence" value="ECO:0007669"/>
    <property type="project" value="UniProtKB-KW"/>
</dbReference>
<dbReference type="GO" id="GO:0015990">
    <property type="term" value="P:electron transport coupled proton transport"/>
    <property type="evidence" value="ECO:0007669"/>
    <property type="project" value="TreeGrafter"/>
</dbReference>
<dbReference type="GO" id="GO:0006123">
    <property type="term" value="P:mitochondrial electron transport, cytochrome c to oxygen"/>
    <property type="evidence" value="ECO:0007669"/>
    <property type="project" value="TreeGrafter"/>
</dbReference>
<dbReference type="FunFam" id="1.20.210.10:FF:000009">
    <property type="entry name" value="Cytochrome c oxidase subunit 1"/>
    <property type="match status" value="1"/>
</dbReference>
<dbReference type="Gene3D" id="1.20.210.10">
    <property type="entry name" value="Cytochrome c oxidase-like, subunit I domain"/>
    <property type="match status" value="1"/>
</dbReference>
<dbReference type="InterPro" id="IPR023616">
    <property type="entry name" value="Cyt_c_oxase-like_su1_dom"/>
</dbReference>
<dbReference type="InterPro" id="IPR036927">
    <property type="entry name" value="Cyt_c_oxase-like_su1_sf"/>
</dbReference>
<dbReference type="InterPro" id="IPR000883">
    <property type="entry name" value="Cyt_C_Oxase_1"/>
</dbReference>
<dbReference type="InterPro" id="IPR023615">
    <property type="entry name" value="Cyt_c_Oxase_su1_BS"/>
</dbReference>
<dbReference type="PANTHER" id="PTHR10422">
    <property type="entry name" value="CYTOCHROME C OXIDASE SUBUNIT 1"/>
    <property type="match status" value="1"/>
</dbReference>
<dbReference type="PANTHER" id="PTHR10422:SF18">
    <property type="entry name" value="CYTOCHROME C OXIDASE SUBUNIT 1"/>
    <property type="match status" value="1"/>
</dbReference>
<dbReference type="Pfam" id="PF00115">
    <property type="entry name" value="COX1"/>
    <property type="match status" value="1"/>
</dbReference>
<dbReference type="PRINTS" id="PR01165">
    <property type="entry name" value="CYCOXIDASEI"/>
</dbReference>
<dbReference type="SUPFAM" id="SSF81442">
    <property type="entry name" value="Cytochrome c oxidase subunit I-like"/>
    <property type="match status" value="1"/>
</dbReference>
<dbReference type="PROSITE" id="PS50855">
    <property type="entry name" value="COX1"/>
    <property type="match status" value="1"/>
</dbReference>
<dbReference type="PROSITE" id="PS00077">
    <property type="entry name" value="COX1_CUB"/>
    <property type="match status" value="1"/>
</dbReference>
<feature type="chain" id="PRO_0000183400" description="Cytochrome c oxidase subunit 1">
    <location>
        <begin position="1" status="less than"/>
        <end position="184" status="greater than"/>
    </location>
</feature>
<feature type="transmembrane region" description="Helical; Name=VI" evidence="2">
    <location>
        <begin position="1" status="less than"/>
        <end position="27"/>
    </location>
</feature>
<feature type="topological domain" description="Mitochondrial matrix" evidence="2">
    <location>
        <begin position="28"/>
        <end position="35"/>
    </location>
</feature>
<feature type="transmembrane region" description="Helical; Name=VII" evidence="2">
    <location>
        <begin position="36"/>
        <end position="52"/>
    </location>
</feature>
<feature type="topological domain" description="Mitochondrial intermembrane" evidence="2">
    <location>
        <begin position="53"/>
        <end position="64"/>
    </location>
</feature>
<feature type="transmembrane region" description="Helical; Name=VIII" evidence="2">
    <location>
        <begin position="65"/>
        <end position="93"/>
    </location>
</feature>
<feature type="topological domain" description="Mitochondrial matrix" evidence="2">
    <location>
        <begin position="94"/>
        <end position="101"/>
    </location>
</feature>
<feature type="transmembrane region" description="Helical; Name=IX" evidence="2">
    <location>
        <begin position="102"/>
        <end position="123"/>
    </location>
</feature>
<feature type="topological domain" description="Mitochondrial intermembrane" evidence="2">
    <location>
        <begin position="124"/>
        <end position="136"/>
    </location>
</feature>
<feature type="transmembrane region" description="Helical; Name=X" evidence="2">
    <location>
        <begin position="137"/>
        <end position="166"/>
    </location>
</feature>
<feature type="topological domain" description="Mitochondrial matrix" evidence="2">
    <location>
        <begin position="167"/>
        <end position="172"/>
    </location>
</feature>
<feature type="transmembrane region" description="Helical; Name=XI" evidence="2">
    <location>
        <begin position="173"/>
        <end position="184" status="greater than"/>
    </location>
</feature>
<feature type="binding site" evidence="2">
    <location>
        <position position="6"/>
    </location>
    <ligand>
        <name>Cu cation</name>
        <dbReference type="ChEBI" id="CHEBI:23378"/>
        <label>B</label>
    </ligand>
</feature>
<feature type="binding site" evidence="2">
    <location>
        <position position="10"/>
    </location>
    <ligand>
        <name>O2</name>
        <dbReference type="ChEBI" id="CHEBI:15379"/>
    </ligand>
</feature>
<feature type="binding site" evidence="2">
    <location>
        <position position="56"/>
    </location>
    <ligand>
        <name>Cu cation</name>
        <dbReference type="ChEBI" id="CHEBI:23378"/>
        <label>B</label>
    </ligand>
</feature>
<feature type="binding site" evidence="2">
    <location>
        <position position="57"/>
    </location>
    <ligand>
        <name>Cu cation</name>
        <dbReference type="ChEBI" id="CHEBI:23378"/>
        <label>B</label>
    </ligand>
</feature>
<feature type="binding site" evidence="2">
    <location>
        <position position="134"/>
    </location>
    <ligand>
        <name>Mg(2+)</name>
        <dbReference type="ChEBI" id="CHEBI:18420"/>
        <note>ligand shared with MT-CO2</note>
    </ligand>
</feature>
<feature type="binding site" evidence="2">
    <location>
        <position position="135"/>
    </location>
    <ligand>
        <name>Mg(2+)</name>
        <dbReference type="ChEBI" id="CHEBI:18420"/>
        <note>ligand shared with MT-CO2</note>
    </ligand>
</feature>
<feature type="binding site" description="axial binding residue" evidence="2">
    <location>
        <position position="142"/>
    </location>
    <ligand>
        <name>heme a3</name>
        <dbReference type="ChEBI" id="CHEBI:83282"/>
        <note>high-spin</note>
    </ligand>
    <ligandPart>
        <name>Fe</name>
        <dbReference type="ChEBI" id="CHEBI:18248"/>
    </ligandPart>
</feature>
<feature type="binding site" description="axial binding residue" evidence="2">
    <location>
        <position position="144"/>
    </location>
    <ligand>
        <name>Fe(II)-heme a</name>
        <dbReference type="ChEBI" id="CHEBI:61715"/>
        <note>low-spin</note>
    </ligand>
    <ligandPart>
        <name>Fe</name>
        <dbReference type="ChEBI" id="CHEBI:18248"/>
    </ligandPart>
</feature>
<feature type="cross-link" description="1'-histidyl-3'-tyrosine (His-Tyr)" evidence="2">
    <location>
        <begin position="6"/>
        <end position="10"/>
    </location>
</feature>
<feature type="non-terminal residue">
    <location>
        <position position="1"/>
    </location>
</feature>
<feature type="non-terminal residue">
    <location>
        <position position="184"/>
    </location>
</feature>
<protein>
    <recommendedName>
        <fullName>Cytochrome c oxidase subunit 1</fullName>
        <ecNumber>7.1.1.9</ecNumber>
    </recommendedName>
    <alternativeName>
        <fullName>Cytochrome c oxidase polypeptide I</fullName>
    </alternativeName>
</protein>
<comment type="function">
    <text evidence="3">Component of the cytochrome c oxidase, the last enzyme in the mitochondrial electron transport chain which drives oxidative phosphorylation. The respiratory chain contains 3 multisubunit complexes succinate dehydrogenase (complex II, CII), ubiquinol-cytochrome c oxidoreductase (cytochrome b-c1 complex, complex III, CIII) and cytochrome c oxidase (complex IV, CIV), that cooperate to transfer electrons derived from NADH and succinate to molecular oxygen, creating an electrochemical gradient over the inner membrane that drives transmembrane transport and the ATP synthase. Cytochrome c oxidase is the component of the respiratory chain that catalyzes the reduction of oxygen to water. Electrons originating from reduced cytochrome c in the intermembrane space (IMS) are transferred via the dinuclear copper A center (CU(A)) of subunit 2 and heme A of subunit 1 to the active site in subunit 1, a binuclear center (BNC) formed by heme A3 and copper B (CU(B)). The BNC reduces molecular oxygen to 2 water molecules using 4 electrons from cytochrome c in the IMS and 4 protons from the mitochondrial matrix.</text>
</comment>
<comment type="catalytic activity">
    <reaction evidence="3">
        <text>4 Fe(II)-[cytochrome c] + O2 + 8 H(+)(in) = 4 Fe(III)-[cytochrome c] + 2 H2O + 4 H(+)(out)</text>
        <dbReference type="Rhea" id="RHEA:11436"/>
        <dbReference type="Rhea" id="RHEA-COMP:10350"/>
        <dbReference type="Rhea" id="RHEA-COMP:14399"/>
        <dbReference type="ChEBI" id="CHEBI:15377"/>
        <dbReference type="ChEBI" id="CHEBI:15378"/>
        <dbReference type="ChEBI" id="CHEBI:15379"/>
        <dbReference type="ChEBI" id="CHEBI:29033"/>
        <dbReference type="ChEBI" id="CHEBI:29034"/>
        <dbReference type="EC" id="7.1.1.9"/>
    </reaction>
    <physiologicalReaction direction="left-to-right" evidence="3">
        <dbReference type="Rhea" id="RHEA:11437"/>
    </physiologicalReaction>
</comment>
<comment type="cofactor">
    <cofactor evidence="2">
        <name>heme</name>
        <dbReference type="ChEBI" id="CHEBI:30413"/>
    </cofactor>
    <text evidence="2">Binds 2 heme A groups non-covalently per subunit.</text>
</comment>
<comment type="cofactor">
    <cofactor evidence="2">
        <name>Cu cation</name>
        <dbReference type="ChEBI" id="CHEBI:23378"/>
    </cofactor>
    <text evidence="2">Binds a copper B center.</text>
</comment>
<comment type="pathway">
    <text evidence="3">Energy metabolism; oxidative phosphorylation.</text>
</comment>
<comment type="subunit">
    <text evidence="1 2">Component of the cytochrome c oxidase (complex IV, CIV), a multisubunit enzyme composed of 14 subunits. The complex is composed of a catalytic core of 3 subunits MT-CO1, MT-CO2 and MT-CO3, encoded in the mitochondrial DNA, and 11 supernumerary subunits COX4I, COX5A, COX5B, COX6A, COX6B, COX6C, COX7A, COX7B, COX7C, COX8 and NDUFA4, which are encoded in the nuclear genome. The complex exists as a monomer or a dimer and forms supercomplexes (SCs) in the inner mitochondrial membrane with NADH-ubiquinone oxidoreductase (complex I, CI) and ubiquinol-cytochrome c oxidoreductase (cytochrome b-c1 complex, complex III, CIII), resulting in different assemblies (supercomplex SCI(1)III(2)IV(1) and megacomplex MCI(2)III(2)IV(2)) (By similarity). As a newly synthesized protein, rapidly incorporates into a multi-subunit assembly intermediate in the inner membrane, called MITRAC (mitochondrial translation regulation assembly intermediate of cytochrome c oxidase) complex, whose core components are COA3/MITRAC12 and COX14. Within the MITRAC complex, interacts with COA3 and with SMIM20/MITRAC7; the interaction with SMIM20 stabilizes the newly synthesized MT-CO1 and prevents its premature turnover. Interacts with TMEM177 in a COX20-dependent manner (By similarity).</text>
</comment>
<comment type="subcellular location">
    <subcellularLocation>
        <location evidence="2">Mitochondrion inner membrane</location>
        <topology evidence="2">Multi-pass membrane protein</topology>
    </subcellularLocation>
</comment>
<comment type="similarity">
    <text evidence="4">Belongs to the heme-copper respiratory oxidase family.</text>
</comment>
<evidence type="ECO:0000250" key="1">
    <source>
        <dbReference type="UniProtKB" id="P00395"/>
    </source>
</evidence>
<evidence type="ECO:0000250" key="2">
    <source>
        <dbReference type="UniProtKB" id="P00396"/>
    </source>
</evidence>
<evidence type="ECO:0000250" key="3">
    <source>
        <dbReference type="UniProtKB" id="P00401"/>
    </source>
</evidence>
<evidence type="ECO:0000305" key="4"/>